<name>CWP08_DAUCA</name>
<comment type="subcellular location">
    <subcellularLocation>
        <location evidence="1">Secreted</location>
        <location evidence="1">Cell wall</location>
    </subcellularLocation>
</comment>
<dbReference type="GO" id="GO:0005576">
    <property type="term" value="C:extracellular region"/>
    <property type="evidence" value="ECO:0007669"/>
    <property type="project" value="UniProtKB-KW"/>
</dbReference>
<accession>P80758</accession>
<proteinExistence type="evidence at protein level"/>
<keyword id="KW-0134">Cell wall</keyword>
<keyword id="KW-0903">Direct protein sequencing</keyword>
<keyword id="KW-0964">Secreted</keyword>
<feature type="chain" id="PRO_0000079649" description="56 kDa cell wall protein">
    <location>
        <begin position="1"/>
        <end position="7" status="greater than"/>
    </location>
</feature>
<feature type="non-terminal residue" evidence="2">
    <location>
        <position position="7"/>
    </location>
</feature>
<reference evidence="3" key="1">
    <citation type="journal article" date="1997" name="J. Biol. Chem.">
        <title>Differential extraction and protein sequencing reveals major differences in patterns of primary cell wall proteins from plants.</title>
        <authorList>
            <person name="Robertson D."/>
            <person name="Mitchell G.P."/>
            <person name="Gilroy J.S."/>
            <person name="Gerrish C."/>
            <person name="Bolwell G.P."/>
            <person name="Slabas A.R."/>
        </authorList>
    </citation>
    <scope>PROTEIN SEQUENCE</scope>
    <scope>SUBCELLULAR LOCATION</scope>
</reference>
<organism>
    <name type="scientific">Daucus carota</name>
    <name type="common">Wild carrot</name>
    <dbReference type="NCBI Taxonomy" id="4039"/>
    <lineage>
        <taxon>Eukaryota</taxon>
        <taxon>Viridiplantae</taxon>
        <taxon>Streptophyta</taxon>
        <taxon>Embryophyta</taxon>
        <taxon>Tracheophyta</taxon>
        <taxon>Spermatophyta</taxon>
        <taxon>Magnoliopsida</taxon>
        <taxon>eudicotyledons</taxon>
        <taxon>Gunneridae</taxon>
        <taxon>Pentapetalae</taxon>
        <taxon>asterids</taxon>
        <taxon>campanulids</taxon>
        <taxon>Apiales</taxon>
        <taxon>Apiaceae</taxon>
        <taxon>Apioideae</taxon>
        <taxon>Scandiceae</taxon>
        <taxon>Daucinae</taxon>
        <taxon>Daucus</taxon>
        <taxon>Daucus sect. Daucus</taxon>
    </lineage>
</organism>
<sequence>SQEDTPL</sequence>
<protein>
    <recommendedName>
        <fullName>56 kDa cell wall protein</fullName>
    </recommendedName>
</protein>
<evidence type="ECO:0000269" key="1">
    <source>
    </source>
</evidence>
<evidence type="ECO:0000303" key="2">
    <source>
    </source>
</evidence>
<evidence type="ECO:0000305" key="3"/>